<accession>A3PCG1</accession>
<proteinExistence type="inferred from homology"/>
<dbReference type="EMBL" id="CP000576">
    <property type="protein sequence ID" value="ABO17436.1"/>
    <property type="molecule type" value="Genomic_DNA"/>
</dbReference>
<dbReference type="RefSeq" id="WP_011818259.1">
    <property type="nucleotide sequence ID" value="NC_009091.1"/>
</dbReference>
<dbReference type="SMR" id="A3PCG1"/>
<dbReference type="STRING" id="167546.P9301_08131"/>
<dbReference type="KEGG" id="pmg:P9301_08131"/>
<dbReference type="eggNOG" id="COG0052">
    <property type="taxonomic scope" value="Bacteria"/>
</dbReference>
<dbReference type="HOGENOM" id="CLU_040318_1_2_3"/>
<dbReference type="OrthoDB" id="9808036at2"/>
<dbReference type="Proteomes" id="UP000001430">
    <property type="component" value="Chromosome"/>
</dbReference>
<dbReference type="GO" id="GO:0022627">
    <property type="term" value="C:cytosolic small ribosomal subunit"/>
    <property type="evidence" value="ECO:0007669"/>
    <property type="project" value="TreeGrafter"/>
</dbReference>
<dbReference type="GO" id="GO:0003735">
    <property type="term" value="F:structural constituent of ribosome"/>
    <property type="evidence" value="ECO:0007669"/>
    <property type="project" value="InterPro"/>
</dbReference>
<dbReference type="GO" id="GO:0006412">
    <property type="term" value="P:translation"/>
    <property type="evidence" value="ECO:0007669"/>
    <property type="project" value="UniProtKB-UniRule"/>
</dbReference>
<dbReference type="CDD" id="cd01425">
    <property type="entry name" value="RPS2"/>
    <property type="match status" value="1"/>
</dbReference>
<dbReference type="FunFam" id="1.10.287.610:FF:000001">
    <property type="entry name" value="30S ribosomal protein S2"/>
    <property type="match status" value="1"/>
</dbReference>
<dbReference type="Gene3D" id="3.40.50.10490">
    <property type="entry name" value="Glucose-6-phosphate isomerase like protein, domain 1"/>
    <property type="match status" value="1"/>
</dbReference>
<dbReference type="Gene3D" id="1.10.287.610">
    <property type="entry name" value="Helix hairpin bin"/>
    <property type="match status" value="1"/>
</dbReference>
<dbReference type="HAMAP" id="MF_00291_B">
    <property type="entry name" value="Ribosomal_uS2_B"/>
    <property type="match status" value="1"/>
</dbReference>
<dbReference type="InterPro" id="IPR001865">
    <property type="entry name" value="Ribosomal_uS2"/>
</dbReference>
<dbReference type="InterPro" id="IPR005706">
    <property type="entry name" value="Ribosomal_uS2_bac/mit/plastid"/>
</dbReference>
<dbReference type="InterPro" id="IPR018130">
    <property type="entry name" value="Ribosomal_uS2_CS"/>
</dbReference>
<dbReference type="InterPro" id="IPR023591">
    <property type="entry name" value="Ribosomal_uS2_flav_dom_sf"/>
</dbReference>
<dbReference type="NCBIfam" id="TIGR01011">
    <property type="entry name" value="rpsB_bact"/>
    <property type="match status" value="1"/>
</dbReference>
<dbReference type="PANTHER" id="PTHR12534">
    <property type="entry name" value="30S RIBOSOMAL PROTEIN S2 PROKARYOTIC AND ORGANELLAR"/>
    <property type="match status" value="1"/>
</dbReference>
<dbReference type="PANTHER" id="PTHR12534:SF0">
    <property type="entry name" value="SMALL RIBOSOMAL SUBUNIT PROTEIN US2M"/>
    <property type="match status" value="1"/>
</dbReference>
<dbReference type="Pfam" id="PF00318">
    <property type="entry name" value="Ribosomal_S2"/>
    <property type="match status" value="1"/>
</dbReference>
<dbReference type="PRINTS" id="PR00395">
    <property type="entry name" value="RIBOSOMALS2"/>
</dbReference>
<dbReference type="SUPFAM" id="SSF52313">
    <property type="entry name" value="Ribosomal protein S2"/>
    <property type="match status" value="1"/>
</dbReference>
<dbReference type="PROSITE" id="PS00962">
    <property type="entry name" value="RIBOSOMAL_S2_1"/>
    <property type="match status" value="1"/>
</dbReference>
<evidence type="ECO:0000255" key="1">
    <source>
        <dbReference type="HAMAP-Rule" id="MF_00291"/>
    </source>
</evidence>
<evidence type="ECO:0000305" key="2"/>
<comment type="similarity">
    <text evidence="1">Belongs to the universal ribosomal protein uS2 family.</text>
</comment>
<organism>
    <name type="scientific">Prochlorococcus marinus (strain MIT 9301)</name>
    <dbReference type="NCBI Taxonomy" id="167546"/>
    <lineage>
        <taxon>Bacteria</taxon>
        <taxon>Bacillati</taxon>
        <taxon>Cyanobacteriota</taxon>
        <taxon>Cyanophyceae</taxon>
        <taxon>Synechococcales</taxon>
        <taxon>Prochlorococcaceae</taxon>
        <taxon>Prochlorococcus</taxon>
    </lineage>
</organism>
<protein>
    <recommendedName>
        <fullName evidence="1">Small ribosomal subunit protein uS2</fullName>
    </recommendedName>
    <alternativeName>
        <fullName evidence="2">30S ribosomal protein S2</fullName>
    </alternativeName>
</protein>
<sequence length="234" mass="26355">MAVVSLSEMMEAGAHFGHQTRRWNPKMSKYIYCARNGVHIIDLVKTALCMNNAYKWTRNAAKSGKRFLFVGTKKQASDVVAQEATRCGAAYVNQRWLGGMLTNWTTMKARIERLKDLERMESSGSIAMRPKKEAAVLRRELERLQKYLGGLKGMRRLPDVVVLVDQRRESNAVLEARKLDISLVSMLDTNCDPDLCEVPIPCNDDAVRSVQLILGRLADAINEGRKGSNAERKN</sequence>
<gene>
    <name evidence="1" type="primary">rpsB</name>
    <name evidence="1" type="synonym">rps2</name>
    <name type="ordered locus">P9301_08131</name>
</gene>
<name>RS2_PROM0</name>
<reference key="1">
    <citation type="journal article" date="2007" name="PLoS Genet.">
        <title>Patterns and implications of gene gain and loss in the evolution of Prochlorococcus.</title>
        <authorList>
            <person name="Kettler G.C."/>
            <person name="Martiny A.C."/>
            <person name="Huang K."/>
            <person name="Zucker J."/>
            <person name="Coleman M.L."/>
            <person name="Rodrigue S."/>
            <person name="Chen F."/>
            <person name="Lapidus A."/>
            <person name="Ferriera S."/>
            <person name="Johnson J."/>
            <person name="Steglich C."/>
            <person name="Church G.M."/>
            <person name="Richardson P."/>
            <person name="Chisholm S.W."/>
        </authorList>
    </citation>
    <scope>NUCLEOTIDE SEQUENCE [LARGE SCALE GENOMIC DNA]</scope>
    <source>
        <strain>MIT 9301</strain>
    </source>
</reference>
<keyword id="KW-1185">Reference proteome</keyword>
<keyword id="KW-0687">Ribonucleoprotein</keyword>
<keyword id="KW-0689">Ribosomal protein</keyword>
<feature type="chain" id="PRO_1000004022" description="Small ribosomal subunit protein uS2">
    <location>
        <begin position="1"/>
        <end position="234"/>
    </location>
</feature>